<dbReference type="EMBL" id="X56980">
    <property type="protein sequence ID" value="CAA40300.1"/>
    <property type="molecule type" value="Genomic_DNA"/>
</dbReference>
<dbReference type="EMBL" id="CP002549">
    <property type="protein sequence ID" value="ADZ18141.1"/>
    <property type="molecule type" value="Genomic_DNA"/>
</dbReference>
<dbReference type="EMBL" id="CP002586">
    <property type="protein sequence ID" value="AEB55071.1"/>
    <property type="molecule type" value="Genomic_DNA"/>
</dbReference>
<dbReference type="PIR" id="A44565">
    <property type="entry name" value="A60341"/>
</dbReference>
<dbReference type="RefSeq" id="WP_013747314.1">
    <property type="nucleotide sequence ID" value="NC_015470.1"/>
</dbReference>
<dbReference type="GeneID" id="12242321"/>
<dbReference type="KEGG" id="chb:G5O_0062"/>
<dbReference type="KEGG" id="chp:CPSIT_0057"/>
<dbReference type="PATRIC" id="fig|331636.3.peg.51"/>
<dbReference type="HOGENOM" id="CLU_693881_0_0_0"/>
<dbReference type="GO" id="GO:0009279">
    <property type="term" value="C:cell outer membrane"/>
    <property type="evidence" value="ECO:0007669"/>
    <property type="project" value="UniProtKB-SubCell"/>
</dbReference>
<dbReference type="GO" id="GO:0046930">
    <property type="term" value="C:pore complex"/>
    <property type="evidence" value="ECO:0007669"/>
    <property type="project" value="UniProtKB-KW"/>
</dbReference>
<dbReference type="GO" id="GO:0015288">
    <property type="term" value="F:porin activity"/>
    <property type="evidence" value="ECO:0007669"/>
    <property type="project" value="UniProtKB-KW"/>
</dbReference>
<dbReference type="GO" id="GO:0005198">
    <property type="term" value="F:structural molecule activity"/>
    <property type="evidence" value="ECO:0007669"/>
    <property type="project" value="InterPro"/>
</dbReference>
<dbReference type="GO" id="GO:0006811">
    <property type="term" value="P:monoatomic ion transport"/>
    <property type="evidence" value="ECO:0007669"/>
    <property type="project" value="UniProtKB-KW"/>
</dbReference>
<dbReference type="GO" id="GO:0008360">
    <property type="term" value="P:regulation of cell shape"/>
    <property type="evidence" value="ECO:0007669"/>
    <property type="project" value="UniProtKB-KW"/>
</dbReference>
<dbReference type="InterPro" id="IPR000604">
    <property type="entry name" value="Major_OMP_Chlamydia"/>
</dbReference>
<dbReference type="Pfam" id="PF01308">
    <property type="entry name" value="Chlam_OMP"/>
    <property type="match status" value="1"/>
</dbReference>
<dbReference type="PRINTS" id="PR01334">
    <property type="entry name" value="CHLAMIDIAOMP"/>
</dbReference>
<protein>
    <recommendedName>
        <fullName>Major outer membrane porin</fullName>
        <shortName>MOMP</shortName>
    </recommendedName>
</protein>
<organism>
    <name type="scientific">Chlamydophila psittaci (strain ATCC VR-125 / 6BC)</name>
    <name type="common">Chlamydia psittaci</name>
    <dbReference type="NCBI Taxonomy" id="331636"/>
    <lineage>
        <taxon>Bacteria</taxon>
        <taxon>Pseudomonadati</taxon>
        <taxon>Chlamydiota</taxon>
        <taxon>Chlamydiia</taxon>
        <taxon>Chlamydiales</taxon>
        <taxon>Chlamydiaceae</taxon>
        <taxon>Chlamydia/Chlamydophila group</taxon>
        <taxon>Chlamydia</taxon>
    </lineage>
</organism>
<feature type="signal peptide" evidence="2">
    <location>
        <begin position="1"/>
        <end position="22"/>
    </location>
</feature>
<feature type="chain" id="PRO_0000248861" description="Major outer membrane porin">
    <location>
        <begin position="23"/>
        <end position="402"/>
    </location>
</feature>
<reference key="1">
    <citation type="journal article" date="1991" name="Infect. Immun.">
        <title>Cloning and sequence analysis of the major outer membrane protein gene of Chlamydia psittaci 6BC.</title>
        <authorList>
            <person name="Everett K.D.E."/>
            <person name="Andersen A.A."/>
            <person name="Plaunt M."/>
            <person name="Hatch T.P."/>
        </authorList>
    </citation>
    <scope>NUCLEOTIDE SEQUENCE [GENOMIC DNA]</scope>
    <scope>PROTEIN SEQUENCE OF 23-35</scope>
    <source>
        <strain>ATCC VR-125 / 6BC</strain>
    </source>
</reference>
<reference key="2">
    <citation type="journal article" date="2011" name="J. Bacteriol.">
        <title>Full-length de novo sequence of the Chlamydophila psittaci type strain, 6BC.</title>
        <authorList>
            <person name="Voigt A."/>
            <person name="Schofl G."/>
            <person name="Heidrich A."/>
            <person name="Sachse K."/>
            <person name="Saluz H.P."/>
        </authorList>
    </citation>
    <scope>NUCLEOTIDE SEQUENCE [LARGE SCALE GENOMIC DNA]</scope>
    <source>
        <strain>ATCC VR-125 / 6BC</strain>
    </source>
</reference>
<reference key="3">
    <citation type="journal article" date="2011" name="J. Bacteriol.">
        <title>Genome sequences of the zoonotic pathogens Chlamydia psittaci 6BC and Cal10.</title>
        <authorList>
            <person name="Grinblat-Huse V."/>
            <person name="Drabek E.F."/>
            <person name="Creasy H.H."/>
            <person name="Daugherty S.C."/>
            <person name="Jones K.M."/>
            <person name="Santana-Cruz I."/>
            <person name="Tallon L.J."/>
            <person name="Read T.D."/>
            <person name="Hatch T.P."/>
            <person name="Bavoil P."/>
            <person name="Myers G.S."/>
        </authorList>
    </citation>
    <scope>NUCLEOTIDE SEQUENCE [LARGE SCALE GENOMIC DNA]</scope>
    <source>
        <strain>ATCC VR-125 / 6BC</strain>
    </source>
</reference>
<reference key="4">
    <citation type="journal article" date="1991" name="J. Bacteriol.">
        <title>Sequence analysis and lipid modification of the cysteine-rich envelope proteins of Chlamydia psittaci 6BC.</title>
        <authorList>
            <person name="Everett K.D.E."/>
            <person name="Hatch T.P."/>
        </authorList>
    </citation>
    <scope>SUBUNIT</scope>
    <source>
        <strain>ATCC VR-125 / 6BC</strain>
    </source>
</reference>
<reference key="5">
    <citation type="journal article" date="1995" name="J. Bacteriol.">
        <title>Architecture of the cell envelope of Chlamydia psittaci 6BC.</title>
        <authorList>
            <person name="Everett K.D.E."/>
            <person name="Hatch T.P."/>
        </authorList>
    </citation>
    <scope>SUBCELLULAR LOCATION</scope>
    <source>
        <strain>ATCC VR-125 / 6BC</strain>
    </source>
</reference>
<evidence type="ECO:0000250" key="1"/>
<evidence type="ECO:0000269" key="2">
    <source>
    </source>
</evidence>
<evidence type="ECO:0000269" key="3">
    <source>
    </source>
</evidence>
<evidence type="ECO:0000269" key="4">
    <source>
    </source>
</evidence>
<evidence type="ECO:0000305" key="5"/>
<comment type="function">
    <text>In elementary bodies (EBs, the infectious stage, which is able to survive outside the host cell) provides the structural integrity of the outer envelope through disulfide cross-links with the small cysteine-rich protein and the large cysteine-rich periplasmic protein. It has been described in publications as the Sarkosyl-insoluble COMC (Chlamydia outer membrane complex), and serves as the functional equivalent of peptidoglycan. It is present but some of the disulfide bonds are reduced in reticulate bodies (RBs).</text>
</comment>
<comment type="function">
    <text evidence="1">Permits diffusion of specific solutes through the outer membrane.</text>
</comment>
<comment type="subunit">
    <text evidence="3">Part of a disulfide cross-linked outer membrane complex (COMC) composed of the major outer membrane porin (MOMP), the small cysteine-rich protein (OmcA) and the large cysteine-rich periplasmic protein (OmcB).</text>
</comment>
<comment type="subcellular location">
    <subcellularLocation>
        <location evidence="4">Cell outer membrane</location>
        <topology evidence="4">Multi-pass membrane protein</topology>
    </subcellularLocation>
</comment>
<comment type="similarity">
    <text evidence="5">Belongs to the chlamydial porin (CP) (TC 1.B.2) family.</text>
</comment>
<sequence>MKKLLKSALLFAATGSALSLQALPVGNPAEPSLLIDGTMWEGASGDPCDPCATWCDAISIRAGYYGDYVFDRVLKVDVNKTFSGMAATPTQATGNASNTNQPEANGRPNIAYGRHMQDAEWFSNAAFLALNIWDRFDIFCTLGASNGYFKASSAAFNLVGLIGFSAASSISTDLPMQLPNVGITQGVVEFYTDTSFSWSVGARGALWECGCATLGAEFQYAQSNPKIEMLNVTSSPAQFVIHKPRGYKGASSNFPLPITAGTTEATDTKSATIKYHEWQVGLALSYRLNMLVPYIGVNWSRATFDADTIRIAQPKLKSEILNITTWNPSLIGSTTALPNNSGKDVLSDVLQIASIQINKMKSRKACGVAVGATLIDADKWSITGEARLINERAAHMNAQFRF</sequence>
<gene>
    <name type="primary">ompA</name>
    <name type="synonym">omp1</name>
    <name type="ordered locus">CPSIT_0057</name>
    <name type="ordered locus">G5O_0062</name>
</gene>
<proteinExistence type="evidence at protein level"/>
<keyword id="KW-0998">Cell outer membrane</keyword>
<keyword id="KW-0133">Cell shape</keyword>
<keyword id="KW-0903">Direct protein sequencing</keyword>
<keyword id="KW-1015">Disulfide bond</keyword>
<keyword id="KW-0406">Ion transport</keyword>
<keyword id="KW-0472">Membrane</keyword>
<keyword id="KW-0626">Porin</keyword>
<keyword id="KW-0732">Signal</keyword>
<keyword id="KW-0812">Transmembrane</keyword>
<keyword id="KW-1134">Transmembrane beta strand</keyword>
<keyword id="KW-0813">Transport</keyword>
<name>MOMP6_CHLP6</name>
<accession>Q46203</accession>
<accession>F0T5L2</accession>